<proteinExistence type="evidence at protein level"/>
<evidence type="ECO:0000255" key="1">
    <source>
        <dbReference type="HAMAP-Rule" id="MF_03006"/>
    </source>
</evidence>
<evidence type="ECO:0000256" key="2">
    <source>
        <dbReference type="SAM" id="MobiDB-lite"/>
    </source>
</evidence>
<evidence type="ECO:0000269" key="3">
    <source>
    </source>
</evidence>
<evidence type="ECO:0000269" key="4">
    <source>
    </source>
</evidence>
<evidence type="ECO:0000269" key="5">
    <source>
    </source>
</evidence>
<evidence type="ECO:0000305" key="6"/>
<organism>
    <name type="scientific">Schizosaccharomyces pombe (strain 972 / ATCC 24843)</name>
    <name type="common">Fission yeast</name>
    <dbReference type="NCBI Taxonomy" id="284812"/>
    <lineage>
        <taxon>Eukaryota</taxon>
        <taxon>Fungi</taxon>
        <taxon>Dikarya</taxon>
        <taxon>Ascomycota</taxon>
        <taxon>Taphrinomycotina</taxon>
        <taxon>Schizosaccharomycetes</taxon>
        <taxon>Schizosaccharomycetales</taxon>
        <taxon>Schizosaccharomycetaceae</taxon>
        <taxon>Schizosaccharomyces</taxon>
    </lineage>
</organism>
<name>EIF3G_SCHPO</name>
<reference key="1">
    <citation type="journal article" date="2002" name="Nature">
        <title>The genome sequence of Schizosaccharomyces pombe.</title>
        <authorList>
            <person name="Wood V."/>
            <person name="Gwilliam R."/>
            <person name="Rajandream M.A."/>
            <person name="Lyne M.H."/>
            <person name="Lyne R."/>
            <person name="Stewart A."/>
            <person name="Sgouros J.G."/>
            <person name="Peat N."/>
            <person name="Hayles J."/>
            <person name="Baker S.G."/>
            <person name="Basham D."/>
            <person name="Bowman S."/>
            <person name="Brooks K."/>
            <person name="Brown D."/>
            <person name="Brown S."/>
            <person name="Chillingworth T."/>
            <person name="Churcher C.M."/>
            <person name="Collins M."/>
            <person name="Connor R."/>
            <person name="Cronin A."/>
            <person name="Davis P."/>
            <person name="Feltwell T."/>
            <person name="Fraser A."/>
            <person name="Gentles S."/>
            <person name="Goble A."/>
            <person name="Hamlin N."/>
            <person name="Harris D.E."/>
            <person name="Hidalgo J."/>
            <person name="Hodgson G."/>
            <person name="Holroyd S."/>
            <person name="Hornsby T."/>
            <person name="Howarth S."/>
            <person name="Huckle E.J."/>
            <person name="Hunt S."/>
            <person name="Jagels K."/>
            <person name="James K.D."/>
            <person name="Jones L."/>
            <person name="Jones M."/>
            <person name="Leather S."/>
            <person name="McDonald S."/>
            <person name="McLean J."/>
            <person name="Mooney P."/>
            <person name="Moule S."/>
            <person name="Mungall K.L."/>
            <person name="Murphy L.D."/>
            <person name="Niblett D."/>
            <person name="Odell C."/>
            <person name="Oliver K."/>
            <person name="O'Neil S."/>
            <person name="Pearson D."/>
            <person name="Quail M.A."/>
            <person name="Rabbinowitsch E."/>
            <person name="Rutherford K.M."/>
            <person name="Rutter S."/>
            <person name="Saunders D."/>
            <person name="Seeger K."/>
            <person name="Sharp S."/>
            <person name="Skelton J."/>
            <person name="Simmonds M.N."/>
            <person name="Squares R."/>
            <person name="Squares S."/>
            <person name="Stevens K."/>
            <person name="Taylor K."/>
            <person name="Taylor R.G."/>
            <person name="Tivey A."/>
            <person name="Walsh S.V."/>
            <person name="Warren T."/>
            <person name="Whitehead S."/>
            <person name="Woodward J.R."/>
            <person name="Volckaert G."/>
            <person name="Aert R."/>
            <person name="Robben J."/>
            <person name="Grymonprez B."/>
            <person name="Weltjens I."/>
            <person name="Vanstreels E."/>
            <person name="Rieger M."/>
            <person name="Schaefer M."/>
            <person name="Mueller-Auer S."/>
            <person name="Gabel C."/>
            <person name="Fuchs M."/>
            <person name="Duesterhoeft A."/>
            <person name="Fritzc C."/>
            <person name="Holzer E."/>
            <person name="Moestl D."/>
            <person name="Hilbert H."/>
            <person name="Borzym K."/>
            <person name="Langer I."/>
            <person name="Beck A."/>
            <person name="Lehrach H."/>
            <person name="Reinhardt R."/>
            <person name="Pohl T.M."/>
            <person name="Eger P."/>
            <person name="Zimmermann W."/>
            <person name="Wedler H."/>
            <person name="Wambutt R."/>
            <person name="Purnelle B."/>
            <person name="Goffeau A."/>
            <person name="Cadieu E."/>
            <person name="Dreano S."/>
            <person name="Gloux S."/>
            <person name="Lelaure V."/>
            <person name="Mottier S."/>
            <person name="Galibert F."/>
            <person name="Aves S.J."/>
            <person name="Xiang Z."/>
            <person name="Hunt C."/>
            <person name="Moore K."/>
            <person name="Hurst S.M."/>
            <person name="Lucas M."/>
            <person name="Rochet M."/>
            <person name="Gaillardin C."/>
            <person name="Tallada V.A."/>
            <person name="Garzon A."/>
            <person name="Thode G."/>
            <person name="Daga R.R."/>
            <person name="Cruzado L."/>
            <person name="Jimenez J."/>
            <person name="Sanchez M."/>
            <person name="del Rey F."/>
            <person name="Benito J."/>
            <person name="Dominguez A."/>
            <person name="Revuelta J.L."/>
            <person name="Moreno S."/>
            <person name="Armstrong J."/>
            <person name="Forsburg S.L."/>
            <person name="Cerutti L."/>
            <person name="Lowe T."/>
            <person name="McCombie W.R."/>
            <person name="Paulsen I."/>
            <person name="Potashkin J."/>
            <person name="Shpakovski G.V."/>
            <person name="Ussery D."/>
            <person name="Barrell B.G."/>
            <person name="Nurse P."/>
        </authorList>
    </citation>
    <scope>NUCLEOTIDE SEQUENCE [LARGE SCALE GENOMIC DNA]</scope>
    <source>
        <strain>972 / ATCC 24843</strain>
    </source>
</reference>
<reference key="2">
    <citation type="submission" date="1998-03" db="EMBL/GenBank/DDBJ databases">
        <title>S.pombe translation initiation factor 3.</title>
        <authorList>
            <person name="Kawamukai M."/>
        </authorList>
    </citation>
    <scope>NUCLEOTIDE SEQUENCE [MRNA] OF 3-282</scope>
</reference>
<reference key="3">
    <citation type="journal article" date="1997" name="DNA Res.">
        <title>Identification of open reading frames in Schizosaccharomyces pombe cDNAs.</title>
        <authorList>
            <person name="Yoshioka S."/>
            <person name="Kato K."/>
            <person name="Nakai K."/>
            <person name="Okayama H."/>
            <person name="Nojima H."/>
        </authorList>
    </citation>
    <scope>NUCLEOTIDE SEQUENCE [LARGE SCALE MRNA] OF 154-282</scope>
    <source>
        <strain>PR745</strain>
    </source>
</reference>
<reference key="4">
    <citation type="journal article" date="2001" name="J. Biol. Chem.">
        <title>Fission yeast homolog of murine Int-6 protein, encoded by mouse mammary tumor virus integration site, is associated with the conserved core subunits of eukaryotic translation initiation factor 3.</title>
        <authorList>
            <person name="Akiyoshi Y."/>
            <person name="Clayton J."/>
            <person name="Phan L."/>
            <person name="Yamamoto M."/>
            <person name="Hinnebusch A.G."/>
            <person name="Watanabe Y."/>
            <person name="Asano K."/>
        </authorList>
    </citation>
    <scope>INTERACTION WITH INT6</scope>
    <scope>IDENTIFICATION IN THE EIF-3 COMPLEX</scope>
    <scope>IDENTIFICATION BY MASS SPECTROMETRY</scope>
</reference>
<reference key="5">
    <citation type="journal article" date="2005" name="BMC Biol.">
        <title>PCI proteins eIF3e and eIF3m define distinct translation initiation factor 3 complexes.</title>
        <authorList>
            <person name="Zhou C."/>
            <person name="Arslan F."/>
            <person name="Wee S."/>
            <person name="Krishnan S."/>
            <person name="Ivanov A.R."/>
            <person name="Oliva A."/>
            <person name="Leatherwood J."/>
            <person name="Wolf D.A."/>
        </authorList>
    </citation>
    <scope>IDENTIFICATION IN THE EIF-3 COMPLEX</scope>
    <scope>IDENTIFICATION BY MASS SPECTROMETRY</scope>
</reference>
<reference key="6">
    <citation type="journal article" date="2008" name="J. Proteome Res.">
        <title>Phosphoproteome analysis of fission yeast.</title>
        <authorList>
            <person name="Wilson-Grady J.T."/>
            <person name="Villen J."/>
            <person name="Gygi S.P."/>
        </authorList>
    </citation>
    <scope>PHOSPHORYLATION [LARGE SCALE ANALYSIS] AT SER-160 AND SER-164</scope>
    <scope>IDENTIFICATION BY MASS SPECTROMETRY</scope>
</reference>
<gene>
    <name type="primary">tif35</name>
    <name type="synonym">eif3g</name>
    <name type="ORF">SPBC18H10.03</name>
</gene>
<feature type="chain" id="PRO_0000123513" description="Eukaryotic translation initiation factor 3 subunit G">
    <location>
        <begin position="1"/>
        <end position="282"/>
    </location>
</feature>
<feature type="domain" description="RRM" evidence="1">
    <location>
        <begin position="202"/>
        <end position="280"/>
    </location>
</feature>
<feature type="region of interest" description="Disordered" evidence="2">
    <location>
        <begin position="1"/>
        <end position="27"/>
    </location>
</feature>
<feature type="modified residue" description="Phosphoserine" evidence="1 5">
    <location>
        <position position="160"/>
    </location>
</feature>
<feature type="modified residue" description="Phosphoserine" evidence="1 5">
    <location>
        <position position="164"/>
    </location>
</feature>
<feature type="sequence conflict" description="In Ref. 2; BAA25105." evidence="6" ref="2">
    <original>G</original>
    <variation>R</variation>
    <location>
        <position position="79"/>
    </location>
</feature>
<protein>
    <recommendedName>
        <fullName evidence="1">Eukaryotic translation initiation factor 3 subunit G</fullName>
        <shortName evidence="1">eIF3g</shortName>
    </recommendedName>
    <alternativeName>
        <fullName evidence="1">Eukaryotic translation initiation factor 3 RNA-binding subunit</fullName>
        <shortName evidence="1">eIF-3 RNA-binding subunit</shortName>
    </alternativeName>
    <alternativeName>
        <fullName evidence="1">Translation initiation factor eIF3 p33 subunit homolog</fullName>
        <shortName evidence="1">eIF3 p33 homolog</shortName>
    </alternativeName>
</protein>
<accession>P78795</accession>
<keyword id="KW-0963">Cytoplasm</keyword>
<keyword id="KW-0396">Initiation factor</keyword>
<keyword id="KW-0597">Phosphoprotein</keyword>
<keyword id="KW-0648">Protein biosynthesis</keyword>
<keyword id="KW-1185">Reference proteome</keyword>
<keyword id="KW-0694">RNA-binding</keyword>
<sequence length="282" mass="31494">MSSSKSLDWADDEDYGTGLPSIQTFDNPDGTKTMIEFRIDDNGKKVKVTRVIRKTVITERVQHAVAERKKWKKFGKEAGKNSGVDARTTSVGENVQLRLQLGWTTTKEEEQDEAALAAAKVKAKGSSVVRCRACKGNHFTAQCPYKSIIGPVDEPPLDASPVSSRASGALGEKGRYIAPHLRAGSGRESGDSMFKRERDDSATLRVTNLSDDTREEELRDLFRRFGGIQRVYLAKDKETGRAKGFAFVSYYDRDCAIKARDRLDGYGWNNLILRCEFSKPRD</sequence>
<dbReference type="EMBL" id="CU329671">
    <property type="protein sequence ID" value="CAA18400.1"/>
    <property type="molecule type" value="Genomic_DNA"/>
</dbReference>
<dbReference type="EMBL" id="AB011823">
    <property type="protein sequence ID" value="BAA25105.1"/>
    <property type="molecule type" value="mRNA"/>
</dbReference>
<dbReference type="EMBL" id="D89144">
    <property type="protein sequence ID" value="BAA13806.1"/>
    <property type="molecule type" value="mRNA"/>
</dbReference>
<dbReference type="PIR" id="T39767">
    <property type="entry name" value="T39767"/>
</dbReference>
<dbReference type="SMR" id="P78795"/>
<dbReference type="BioGRID" id="277337">
    <property type="interactions" value="11"/>
</dbReference>
<dbReference type="FunCoup" id="P78795">
    <property type="interactions" value="659"/>
</dbReference>
<dbReference type="IntAct" id="P78795">
    <property type="interactions" value="1"/>
</dbReference>
<dbReference type="MINT" id="P78795"/>
<dbReference type="STRING" id="284812.P78795"/>
<dbReference type="iPTMnet" id="P78795"/>
<dbReference type="PaxDb" id="4896-SPBC18H10.03.1"/>
<dbReference type="EnsemblFungi" id="SPBC18H10.03.1">
    <property type="protein sequence ID" value="SPBC18H10.03.1:pep"/>
    <property type="gene ID" value="SPBC18H10.03"/>
</dbReference>
<dbReference type="KEGG" id="spo:2540819"/>
<dbReference type="PomBase" id="SPBC18H10.03">
    <property type="gene designation" value="tif35"/>
</dbReference>
<dbReference type="VEuPathDB" id="FungiDB:SPBC18H10.03"/>
<dbReference type="eggNOG" id="KOG0122">
    <property type="taxonomic scope" value="Eukaryota"/>
</dbReference>
<dbReference type="HOGENOM" id="CLU_034595_0_0_1"/>
<dbReference type="InParanoid" id="P78795"/>
<dbReference type="OMA" id="ICQGDHF"/>
<dbReference type="PhylomeDB" id="P78795"/>
<dbReference type="Reactome" id="R-SPO-156827">
    <property type="pathway name" value="L13a-mediated translational silencing of Ceruloplasmin expression"/>
</dbReference>
<dbReference type="Reactome" id="R-SPO-72649">
    <property type="pathway name" value="Translation initiation complex formation"/>
</dbReference>
<dbReference type="Reactome" id="R-SPO-72689">
    <property type="pathway name" value="Formation of a pool of free 40S subunits"/>
</dbReference>
<dbReference type="Reactome" id="R-SPO-72695">
    <property type="pathway name" value="Formation of the ternary complex, and subsequently, the 43S complex"/>
</dbReference>
<dbReference type="Reactome" id="R-SPO-72702">
    <property type="pathway name" value="Ribosomal scanning and start codon recognition"/>
</dbReference>
<dbReference type="Reactome" id="R-SPO-72706">
    <property type="pathway name" value="GTP hydrolysis and joining of the 60S ribosomal subunit"/>
</dbReference>
<dbReference type="PRO" id="PR:P78795"/>
<dbReference type="Proteomes" id="UP000002485">
    <property type="component" value="Chromosome II"/>
</dbReference>
<dbReference type="GO" id="GO:0005829">
    <property type="term" value="C:cytosol"/>
    <property type="evidence" value="ECO:0007005"/>
    <property type="project" value="PomBase"/>
</dbReference>
<dbReference type="GO" id="GO:0016282">
    <property type="term" value="C:eukaryotic 43S preinitiation complex"/>
    <property type="evidence" value="ECO:0000314"/>
    <property type="project" value="PomBase"/>
</dbReference>
<dbReference type="GO" id="GO:0033290">
    <property type="term" value="C:eukaryotic 48S preinitiation complex"/>
    <property type="evidence" value="ECO:0007669"/>
    <property type="project" value="UniProtKB-UniRule"/>
</dbReference>
<dbReference type="GO" id="GO:0005852">
    <property type="term" value="C:eukaryotic translation initiation factor 3 complex"/>
    <property type="evidence" value="ECO:0000314"/>
    <property type="project" value="PomBase"/>
</dbReference>
<dbReference type="GO" id="GO:0071540">
    <property type="term" value="C:eukaryotic translation initiation factor 3 complex, eIF3e"/>
    <property type="evidence" value="ECO:0000314"/>
    <property type="project" value="PomBase"/>
</dbReference>
<dbReference type="GO" id="GO:0071541">
    <property type="term" value="C:eukaryotic translation initiation factor 3 complex, eIF3m"/>
    <property type="evidence" value="ECO:0000314"/>
    <property type="project" value="PomBase"/>
</dbReference>
<dbReference type="GO" id="GO:0003723">
    <property type="term" value="F:RNA binding"/>
    <property type="evidence" value="ECO:0000255"/>
    <property type="project" value="PomBase"/>
</dbReference>
<dbReference type="GO" id="GO:0003743">
    <property type="term" value="F:translation initiation factor activity"/>
    <property type="evidence" value="ECO:0007669"/>
    <property type="project" value="UniProtKB-UniRule"/>
</dbReference>
<dbReference type="GO" id="GO:0001732">
    <property type="term" value="P:formation of cytoplasmic translation initiation complex"/>
    <property type="evidence" value="ECO:0000305"/>
    <property type="project" value="PomBase"/>
</dbReference>
<dbReference type="CDD" id="cd12933">
    <property type="entry name" value="eIF3G"/>
    <property type="match status" value="1"/>
</dbReference>
<dbReference type="CDD" id="cd12408">
    <property type="entry name" value="RRM_eIF3G_like"/>
    <property type="match status" value="1"/>
</dbReference>
<dbReference type="FunFam" id="3.30.70.330:FF:000328">
    <property type="entry name" value="Eukaryotic translation initiation factor 3 subunit G"/>
    <property type="match status" value="1"/>
</dbReference>
<dbReference type="Gene3D" id="3.30.70.330">
    <property type="match status" value="1"/>
</dbReference>
<dbReference type="HAMAP" id="MF_03006">
    <property type="entry name" value="eIF3g"/>
    <property type="match status" value="1"/>
</dbReference>
<dbReference type="InterPro" id="IPR017334">
    <property type="entry name" value="eIF3_g"/>
</dbReference>
<dbReference type="InterPro" id="IPR024675">
    <property type="entry name" value="eIF3g_N"/>
</dbReference>
<dbReference type="InterPro" id="IPR034240">
    <property type="entry name" value="eIF3G_RRM"/>
</dbReference>
<dbReference type="InterPro" id="IPR012677">
    <property type="entry name" value="Nucleotide-bd_a/b_plait_sf"/>
</dbReference>
<dbReference type="InterPro" id="IPR035979">
    <property type="entry name" value="RBD_domain_sf"/>
</dbReference>
<dbReference type="InterPro" id="IPR000504">
    <property type="entry name" value="RRM_dom"/>
</dbReference>
<dbReference type="PANTHER" id="PTHR10352">
    <property type="entry name" value="EUKARYOTIC TRANSLATION INITIATION FACTOR 3 SUBUNIT G"/>
    <property type="match status" value="1"/>
</dbReference>
<dbReference type="Pfam" id="PF12353">
    <property type="entry name" value="eIF3g"/>
    <property type="match status" value="1"/>
</dbReference>
<dbReference type="Pfam" id="PF00076">
    <property type="entry name" value="RRM_1"/>
    <property type="match status" value="1"/>
</dbReference>
<dbReference type="PIRSF" id="PIRSF037949">
    <property type="entry name" value="Transl_init_eIF-3_RNA-bind"/>
    <property type="match status" value="1"/>
</dbReference>
<dbReference type="SMART" id="SM00360">
    <property type="entry name" value="RRM"/>
    <property type="match status" value="1"/>
</dbReference>
<dbReference type="SUPFAM" id="SSF54928">
    <property type="entry name" value="RNA-binding domain, RBD"/>
    <property type="match status" value="1"/>
</dbReference>
<dbReference type="PROSITE" id="PS50102">
    <property type="entry name" value="RRM"/>
    <property type="match status" value="1"/>
</dbReference>
<comment type="function">
    <text evidence="1">RNA-binding component of the eukaryotic translation initiation factor 3 (eIF-3) complex, which is involved in protein synthesis of a specialized repertoire of mRNAs and, together with other initiation factors, stimulates binding of mRNA and methionyl-tRNAi to the 40S ribosome. The eIF-3 complex specifically targets and initiates translation of a subset of mRNAs involved in cell proliferation. This subunit can bind 18S rRNA.</text>
</comment>
<comment type="subunit">
    <text evidence="1 3 4">Component of the eukaryotic translation initiation factor 3 (eIF-3) complex. The eIF-3 complex appears to include tif32/eif3a, SPAC25G10.08/eif3b, tif33/eif3c, SPBC4C3.07/eif3f, tif35/eif3g and sum1/eif3i. This set of common subunits may also associate exclusively with either moe1/eif3d and int6/eif3e, or with SPAC821.05/eif3h and SPAC1751.03/eif3m. The eIF-3 complex may also include SPAC3A12.13c/eif3j.</text>
</comment>
<comment type="subcellular location">
    <subcellularLocation>
        <location evidence="1">Cytoplasm</location>
    </subcellularLocation>
</comment>
<comment type="similarity">
    <text evidence="1">Belongs to the eIF-3 subunit G family.</text>
</comment>